<name>DBP9_CRYNB</name>
<gene>
    <name type="primary">DBP9</name>
    <name type="ordered locus">CNBM1920</name>
</gene>
<sequence>MLSKSNQPSDALLDADFSFSQPPFSTLIDSRVLVALADQKFAHPTLVQAKAIPLLLEGKDVLARARTGSGKTAAYIVPAVQKILEAKADLSPASAEYQATRAIILVPTKELALQVSSFTKNVTKYCDGLVQCVDVAAGGASIQRVLLNDKPDIVISTPTKLLSLLQSKSLSLSQLSFLAIDEADLLLSYGFKDDLTRIMDPTSGWIPKLGVQGCLMSATLSDDVEGIKGLVLRNPAILTLSEPASASSLLSQHYTHTSERDKFLLIYVLLKLKLIRGKSIIFVNDVERGYRVKLFLEQFGVKCCVVNSELPLASRYHVVEEFNRGVYDVVVATDEGAGADAEEEEDVKQEESESEGEEDEDDDKEAEDKEKEAKEEAKPAPGPSKRRATSPPSKPNKRARRADPTSSLARGIDFTSASSVINFDLPLTSTSYMHRVGRTARAGQSGLALSFVVPRENWGKDKAVSIKSAEKDEKVFERIKERVKKESDSEIKEWDWKGRKGEIEGFRYRMEDALKAVTGKRVAEARREEVRRELLNSEKLKSHFAANPLDLSYLRHDAPLHPARQQTHLKHVPNYLMPKIAALPTGGDVTDHAGVGFSRRGRGGHRGRGGRGSKSGRGKKVDPLKFK</sequence>
<proteinExistence type="inferred from homology"/>
<organism>
    <name type="scientific">Cryptococcus neoformans var. neoformans serotype D (strain B-3501A)</name>
    <name type="common">Filobasidiella neoformans</name>
    <dbReference type="NCBI Taxonomy" id="283643"/>
    <lineage>
        <taxon>Eukaryota</taxon>
        <taxon>Fungi</taxon>
        <taxon>Dikarya</taxon>
        <taxon>Basidiomycota</taxon>
        <taxon>Agaricomycotina</taxon>
        <taxon>Tremellomycetes</taxon>
        <taxon>Tremellales</taxon>
        <taxon>Cryptococcaceae</taxon>
        <taxon>Cryptococcus</taxon>
        <taxon>Cryptococcus neoformans species complex</taxon>
    </lineage>
</organism>
<protein>
    <recommendedName>
        <fullName>ATP-dependent RNA helicase DBP9</fullName>
        <ecNumber>3.6.4.13</ecNumber>
    </recommendedName>
</protein>
<reference key="1">
    <citation type="journal article" date="2005" name="Science">
        <title>The genome of the basidiomycetous yeast and human pathogen Cryptococcus neoformans.</title>
        <authorList>
            <person name="Loftus B.J."/>
            <person name="Fung E."/>
            <person name="Roncaglia P."/>
            <person name="Rowley D."/>
            <person name="Amedeo P."/>
            <person name="Bruno D."/>
            <person name="Vamathevan J."/>
            <person name="Miranda M."/>
            <person name="Anderson I.J."/>
            <person name="Fraser J.A."/>
            <person name="Allen J.E."/>
            <person name="Bosdet I.E."/>
            <person name="Brent M.R."/>
            <person name="Chiu R."/>
            <person name="Doering T.L."/>
            <person name="Donlin M.J."/>
            <person name="D'Souza C.A."/>
            <person name="Fox D.S."/>
            <person name="Grinberg V."/>
            <person name="Fu J."/>
            <person name="Fukushima M."/>
            <person name="Haas B.J."/>
            <person name="Huang J.C."/>
            <person name="Janbon G."/>
            <person name="Jones S.J.M."/>
            <person name="Koo H.L."/>
            <person name="Krzywinski M.I."/>
            <person name="Kwon-Chung K.J."/>
            <person name="Lengeler K.B."/>
            <person name="Maiti R."/>
            <person name="Marra M.A."/>
            <person name="Marra R.E."/>
            <person name="Mathewson C.A."/>
            <person name="Mitchell T.G."/>
            <person name="Pertea M."/>
            <person name="Riggs F.R."/>
            <person name="Salzberg S.L."/>
            <person name="Schein J.E."/>
            <person name="Shvartsbeyn A."/>
            <person name="Shin H."/>
            <person name="Shumway M."/>
            <person name="Specht C.A."/>
            <person name="Suh B.B."/>
            <person name="Tenney A."/>
            <person name="Utterback T.R."/>
            <person name="Wickes B.L."/>
            <person name="Wortman J.R."/>
            <person name="Wye N.H."/>
            <person name="Kronstad J.W."/>
            <person name="Lodge J.K."/>
            <person name="Heitman J."/>
            <person name="Davis R.W."/>
            <person name="Fraser C.M."/>
            <person name="Hyman R.W."/>
        </authorList>
    </citation>
    <scope>NUCLEOTIDE SEQUENCE [LARGE SCALE GENOMIC DNA]</scope>
    <source>
        <strain>B-3501A</strain>
    </source>
</reference>
<dbReference type="EC" id="3.6.4.13"/>
<dbReference type="EMBL" id="AAEY01000064">
    <property type="protein sequence ID" value="EAL17387.1"/>
    <property type="molecule type" value="Genomic_DNA"/>
</dbReference>
<dbReference type="RefSeq" id="XP_772034.1">
    <property type="nucleotide sequence ID" value="XM_766941.1"/>
</dbReference>
<dbReference type="SMR" id="P0CR11"/>
<dbReference type="EnsemblFungi" id="AAW46985">
    <property type="protein sequence ID" value="AAW46985"/>
    <property type="gene ID" value="CNM02050"/>
</dbReference>
<dbReference type="GeneID" id="4939552"/>
<dbReference type="KEGG" id="cnb:CNBM1920"/>
<dbReference type="VEuPathDB" id="FungiDB:CNBM1920"/>
<dbReference type="HOGENOM" id="CLU_003041_17_1_1"/>
<dbReference type="OrthoDB" id="7509at5206"/>
<dbReference type="GO" id="GO:0005829">
    <property type="term" value="C:cytosol"/>
    <property type="evidence" value="ECO:0007669"/>
    <property type="project" value="TreeGrafter"/>
</dbReference>
<dbReference type="GO" id="GO:0005730">
    <property type="term" value="C:nucleolus"/>
    <property type="evidence" value="ECO:0007669"/>
    <property type="project" value="UniProtKB-SubCell"/>
</dbReference>
<dbReference type="GO" id="GO:0005524">
    <property type="term" value="F:ATP binding"/>
    <property type="evidence" value="ECO:0007669"/>
    <property type="project" value="UniProtKB-KW"/>
</dbReference>
<dbReference type="GO" id="GO:0016887">
    <property type="term" value="F:ATP hydrolysis activity"/>
    <property type="evidence" value="ECO:0007669"/>
    <property type="project" value="RHEA"/>
</dbReference>
<dbReference type="GO" id="GO:0003723">
    <property type="term" value="F:RNA binding"/>
    <property type="evidence" value="ECO:0007669"/>
    <property type="project" value="UniProtKB-KW"/>
</dbReference>
<dbReference type="GO" id="GO:0003724">
    <property type="term" value="F:RNA helicase activity"/>
    <property type="evidence" value="ECO:0007669"/>
    <property type="project" value="UniProtKB-EC"/>
</dbReference>
<dbReference type="GO" id="GO:0006364">
    <property type="term" value="P:rRNA processing"/>
    <property type="evidence" value="ECO:0007669"/>
    <property type="project" value="UniProtKB-KW"/>
</dbReference>
<dbReference type="CDD" id="cd17961">
    <property type="entry name" value="DEADc_DDX56"/>
    <property type="match status" value="1"/>
</dbReference>
<dbReference type="CDD" id="cd18787">
    <property type="entry name" value="SF2_C_DEAD"/>
    <property type="match status" value="1"/>
</dbReference>
<dbReference type="Gene3D" id="3.40.50.300">
    <property type="entry name" value="P-loop containing nucleotide triphosphate hydrolases"/>
    <property type="match status" value="2"/>
</dbReference>
<dbReference type="InterPro" id="IPR011545">
    <property type="entry name" value="DEAD/DEAH_box_helicase_dom"/>
</dbReference>
<dbReference type="InterPro" id="IPR050079">
    <property type="entry name" value="DEAD_box_RNA_helicase"/>
</dbReference>
<dbReference type="InterPro" id="IPR014001">
    <property type="entry name" value="Helicase_ATP-bd"/>
</dbReference>
<dbReference type="InterPro" id="IPR001650">
    <property type="entry name" value="Helicase_C-like"/>
</dbReference>
<dbReference type="InterPro" id="IPR027417">
    <property type="entry name" value="P-loop_NTPase"/>
</dbReference>
<dbReference type="PANTHER" id="PTHR47959">
    <property type="entry name" value="ATP-DEPENDENT RNA HELICASE RHLE-RELATED"/>
    <property type="match status" value="1"/>
</dbReference>
<dbReference type="PANTHER" id="PTHR47959:SF21">
    <property type="entry name" value="DEAD-BOX HELICASE 56"/>
    <property type="match status" value="1"/>
</dbReference>
<dbReference type="Pfam" id="PF00270">
    <property type="entry name" value="DEAD"/>
    <property type="match status" value="1"/>
</dbReference>
<dbReference type="Pfam" id="PF00271">
    <property type="entry name" value="Helicase_C"/>
    <property type="match status" value="2"/>
</dbReference>
<dbReference type="SMART" id="SM00487">
    <property type="entry name" value="DEXDc"/>
    <property type="match status" value="1"/>
</dbReference>
<dbReference type="SMART" id="SM00490">
    <property type="entry name" value="HELICc"/>
    <property type="match status" value="1"/>
</dbReference>
<dbReference type="SUPFAM" id="SSF52540">
    <property type="entry name" value="P-loop containing nucleoside triphosphate hydrolases"/>
    <property type="match status" value="2"/>
</dbReference>
<dbReference type="PROSITE" id="PS51192">
    <property type="entry name" value="HELICASE_ATP_BIND_1"/>
    <property type="match status" value="1"/>
</dbReference>
<dbReference type="PROSITE" id="PS51194">
    <property type="entry name" value="HELICASE_CTER"/>
    <property type="match status" value="1"/>
</dbReference>
<comment type="function">
    <text evidence="1">ATP-binding RNA helicase involved in the biogenesis of 60S ribosomal subunits and is required for the normal formation of 25S and 5.8S rRNAs.</text>
</comment>
<comment type="catalytic activity">
    <reaction>
        <text>ATP + H2O = ADP + phosphate + H(+)</text>
        <dbReference type="Rhea" id="RHEA:13065"/>
        <dbReference type="ChEBI" id="CHEBI:15377"/>
        <dbReference type="ChEBI" id="CHEBI:15378"/>
        <dbReference type="ChEBI" id="CHEBI:30616"/>
        <dbReference type="ChEBI" id="CHEBI:43474"/>
        <dbReference type="ChEBI" id="CHEBI:456216"/>
        <dbReference type="EC" id="3.6.4.13"/>
    </reaction>
</comment>
<comment type="subcellular location">
    <subcellularLocation>
        <location evidence="1">Nucleus</location>
        <location evidence="1">Nucleolus</location>
    </subcellularLocation>
</comment>
<comment type="domain">
    <text>The Q motif is unique to and characteristic of the DEAD box family of RNA helicases and controls ATP binding and hydrolysis.</text>
</comment>
<comment type="similarity">
    <text evidence="5">Belongs to the DEAD box helicase family. DDX56/DBP9 subfamily.</text>
</comment>
<accession>P0CR11</accession>
<accession>Q55I26</accession>
<accession>Q5K7L2</accession>
<evidence type="ECO:0000250" key="1"/>
<evidence type="ECO:0000255" key="2">
    <source>
        <dbReference type="PROSITE-ProRule" id="PRU00541"/>
    </source>
</evidence>
<evidence type="ECO:0000255" key="3">
    <source>
        <dbReference type="PROSITE-ProRule" id="PRU00542"/>
    </source>
</evidence>
<evidence type="ECO:0000256" key="4">
    <source>
        <dbReference type="SAM" id="MobiDB-lite"/>
    </source>
</evidence>
<evidence type="ECO:0000305" key="5"/>
<keyword id="KW-0067">ATP-binding</keyword>
<keyword id="KW-0347">Helicase</keyword>
<keyword id="KW-0378">Hydrolase</keyword>
<keyword id="KW-0547">Nucleotide-binding</keyword>
<keyword id="KW-0539">Nucleus</keyword>
<keyword id="KW-0690">Ribosome biogenesis</keyword>
<keyword id="KW-0694">RNA-binding</keyword>
<keyword id="KW-0698">rRNA processing</keyword>
<feature type="chain" id="PRO_0000410266" description="ATP-dependent RNA helicase DBP9">
    <location>
        <begin position="1"/>
        <end position="627"/>
    </location>
</feature>
<feature type="domain" description="Helicase ATP-binding" evidence="2">
    <location>
        <begin position="52"/>
        <end position="238"/>
    </location>
</feature>
<feature type="domain" description="Helicase C-terminal" evidence="3">
    <location>
        <begin position="249"/>
        <end position="487"/>
    </location>
</feature>
<feature type="region of interest" description="Disordered" evidence="4">
    <location>
        <begin position="337"/>
        <end position="410"/>
    </location>
</feature>
<feature type="region of interest" description="Disordered" evidence="4">
    <location>
        <begin position="586"/>
        <end position="627"/>
    </location>
</feature>
<feature type="short sequence motif" description="Q motif">
    <location>
        <begin position="40"/>
        <end position="48"/>
    </location>
</feature>
<feature type="short sequence motif" description="DEAD box">
    <location>
        <begin position="181"/>
        <end position="184"/>
    </location>
</feature>
<feature type="compositionally biased region" description="Acidic residues" evidence="4">
    <location>
        <begin position="340"/>
        <end position="365"/>
    </location>
</feature>
<feature type="compositionally biased region" description="Basic and acidic residues" evidence="4">
    <location>
        <begin position="366"/>
        <end position="378"/>
    </location>
</feature>
<feature type="compositionally biased region" description="Basic residues" evidence="4">
    <location>
        <begin position="599"/>
        <end position="618"/>
    </location>
</feature>
<feature type="binding site" evidence="2">
    <location>
        <begin position="65"/>
        <end position="72"/>
    </location>
    <ligand>
        <name>ATP</name>
        <dbReference type="ChEBI" id="CHEBI:30616"/>
    </ligand>
</feature>